<organism>
    <name type="scientific">Dictyoglomus turgidum (strain DSM 6724 / Z-1310)</name>
    <dbReference type="NCBI Taxonomy" id="515635"/>
    <lineage>
        <taxon>Bacteria</taxon>
        <taxon>Pseudomonadati</taxon>
        <taxon>Dictyoglomota</taxon>
        <taxon>Dictyoglomia</taxon>
        <taxon>Dictyoglomales</taxon>
        <taxon>Dictyoglomaceae</taxon>
        <taxon>Dictyoglomus</taxon>
    </lineage>
</organism>
<protein>
    <recommendedName>
        <fullName evidence="1">Large ribosomal subunit protein uL10</fullName>
    </recommendedName>
    <alternativeName>
        <fullName evidence="2">50S ribosomal protein L10</fullName>
    </alternativeName>
</protein>
<comment type="function">
    <text evidence="1">Forms part of the ribosomal stalk, playing a central role in the interaction of the ribosome with GTP-bound translation factors.</text>
</comment>
<comment type="subunit">
    <text evidence="1">Part of the ribosomal stalk of the 50S ribosomal subunit. The N-terminus interacts with L11 and the large rRNA to form the base of the stalk. The C-terminus forms an elongated spine to which L12 dimers bind in a sequential fashion forming a multimeric L10(L12)X complex.</text>
</comment>
<comment type="similarity">
    <text evidence="1">Belongs to the universal ribosomal protein uL10 family.</text>
</comment>
<accession>B8E0K1</accession>
<sequence>MPKPEKIQKVEELYQKMLNANALIFTEFKGLSVADLTQLRGKIRPLNAEYRVVKNTLALRAIQRMYPDKDLEKFFVGPTAITYCYDDPFGVLKALVDYAKDHELLKFKGGIIDGEVYSADEIRELAKLPPKEVILSQVVGSISAPLSSLVWNLKWPVNKLVWTLDAIAKEKEKISINQ</sequence>
<proteinExistence type="inferred from homology"/>
<reference key="1">
    <citation type="journal article" date="2016" name="Front. Microbiol.">
        <title>The complete genome sequence of hyperthermophile Dictyoglomus turgidum DSM 6724 reveals a specialized carbohydrate fermentor.</title>
        <authorList>
            <person name="Brumm P.J."/>
            <person name="Gowda K."/>
            <person name="Robb F.T."/>
            <person name="Mead D.A."/>
        </authorList>
    </citation>
    <scope>NUCLEOTIDE SEQUENCE [LARGE SCALE GENOMIC DNA]</scope>
    <source>
        <strain>DSM 6724 / Z-1310</strain>
    </source>
</reference>
<feature type="chain" id="PRO_1000120951" description="Large ribosomal subunit protein uL10">
    <location>
        <begin position="1"/>
        <end position="178"/>
    </location>
</feature>
<keyword id="KW-1185">Reference proteome</keyword>
<keyword id="KW-0687">Ribonucleoprotein</keyword>
<keyword id="KW-0689">Ribosomal protein</keyword>
<keyword id="KW-0694">RNA-binding</keyword>
<keyword id="KW-0699">rRNA-binding</keyword>
<dbReference type="EMBL" id="CP001251">
    <property type="protein sequence ID" value="ACK42646.1"/>
    <property type="molecule type" value="Genomic_DNA"/>
</dbReference>
<dbReference type="RefSeq" id="WP_012583726.1">
    <property type="nucleotide sequence ID" value="NC_011661.1"/>
</dbReference>
<dbReference type="RefSeq" id="YP_002353260.1">
    <property type="nucleotide sequence ID" value="NC_011661.1"/>
</dbReference>
<dbReference type="SMR" id="B8E0K1"/>
<dbReference type="FunCoup" id="B8E0K1">
    <property type="interactions" value="419"/>
</dbReference>
<dbReference type="STRING" id="515635.Dtur_1372"/>
<dbReference type="EnsemblBacteria" id="ACK42646">
    <property type="protein sequence ID" value="ACK42646"/>
    <property type="gene ID" value="Dtur_1372"/>
</dbReference>
<dbReference type="KEGG" id="dtu:Dtur_1372"/>
<dbReference type="PATRIC" id="fig|515635.4.peg.1417"/>
<dbReference type="eggNOG" id="COG0244">
    <property type="taxonomic scope" value="Bacteria"/>
</dbReference>
<dbReference type="HOGENOM" id="CLU_092227_2_0_0"/>
<dbReference type="InParanoid" id="B8E0K1"/>
<dbReference type="OrthoDB" id="9808307at2"/>
<dbReference type="Proteomes" id="UP000007719">
    <property type="component" value="Chromosome"/>
</dbReference>
<dbReference type="GO" id="GO:0022625">
    <property type="term" value="C:cytosolic large ribosomal subunit"/>
    <property type="evidence" value="ECO:0000318"/>
    <property type="project" value="GO_Central"/>
</dbReference>
<dbReference type="GO" id="GO:0070180">
    <property type="term" value="F:large ribosomal subunit rRNA binding"/>
    <property type="evidence" value="ECO:0007669"/>
    <property type="project" value="UniProtKB-UniRule"/>
</dbReference>
<dbReference type="GO" id="GO:0003735">
    <property type="term" value="F:structural constituent of ribosome"/>
    <property type="evidence" value="ECO:0000318"/>
    <property type="project" value="GO_Central"/>
</dbReference>
<dbReference type="GO" id="GO:0006412">
    <property type="term" value="P:translation"/>
    <property type="evidence" value="ECO:0000318"/>
    <property type="project" value="GO_Central"/>
</dbReference>
<dbReference type="CDD" id="cd05797">
    <property type="entry name" value="Ribosomal_L10"/>
    <property type="match status" value="1"/>
</dbReference>
<dbReference type="FunFam" id="3.30.70.1730:FF:000034">
    <property type="entry name" value="50S ribosomal protein L10"/>
    <property type="match status" value="1"/>
</dbReference>
<dbReference type="Gene3D" id="3.30.70.1730">
    <property type="match status" value="1"/>
</dbReference>
<dbReference type="Gene3D" id="6.10.250.290">
    <property type="match status" value="1"/>
</dbReference>
<dbReference type="HAMAP" id="MF_00362">
    <property type="entry name" value="Ribosomal_uL10"/>
    <property type="match status" value="1"/>
</dbReference>
<dbReference type="InterPro" id="IPR001790">
    <property type="entry name" value="Ribosomal_uL10"/>
</dbReference>
<dbReference type="InterPro" id="IPR043141">
    <property type="entry name" value="Ribosomal_uL10-like_sf"/>
</dbReference>
<dbReference type="InterPro" id="IPR022973">
    <property type="entry name" value="Ribosomal_uL10_bac"/>
</dbReference>
<dbReference type="InterPro" id="IPR047865">
    <property type="entry name" value="Ribosomal_uL10_bac_type"/>
</dbReference>
<dbReference type="NCBIfam" id="NF000955">
    <property type="entry name" value="PRK00099.1-1"/>
    <property type="match status" value="1"/>
</dbReference>
<dbReference type="PANTHER" id="PTHR11560">
    <property type="entry name" value="39S RIBOSOMAL PROTEIN L10, MITOCHONDRIAL"/>
    <property type="match status" value="1"/>
</dbReference>
<dbReference type="Pfam" id="PF00466">
    <property type="entry name" value="Ribosomal_L10"/>
    <property type="match status" value="1"/>
</dbReference>
<dbReference type="SUPFAM" id="SSF160369">
    <property type="entry name" value="Ribosomal protein L10-like"/>
    <property type="match status" value="1"/>
</dbReference>
<name>RL10_DICTD</name>
<gene>
    <name evidence="1" type="primary">rplJ</name>
    <name type="ordered locus">Dtur_1372</name>
</gene>
<evidence type="ECO:0000255" key="1">
    <source>
        <dbReference type="HAMAP-Rule" id="MF_00362"/>
    </source>
</evidence>
<evidence type="ECO:0000305" key="2"/>